<dbReference type="EMBL" id="DQ141217">
    <property type="protein sequence ID" value="ABA29742.1"/>
    <property type="molecule type" value="mRNA"/>
</dbReference>
<dbReference type="EMBL" id="BX324162">
    <property type="protein sequence ID" value="CAX13814.1"/>
    <property type="molecule type" value="Genomic_DNA"/>
</dbReference>
<dbReference type="EMBL" id="BC053205">
    <property type="protein sequence ID" value="AAH53205.1"/>
    <property type="molecule type" value="mRNA"/>
</dbReference>
<dbReference type="RefSeq" id="NP_958502.1">
    <property type="nucleotide sequence ID" value="NM_201345.1"/>
</dbReference>
<dbReference type="RefSeq" id="XP_005157632.1">
    <property type="nucleotide sequence ID" value="XM_005157575.5"/>
</dbReference>
<dbReference type="SMR" id="Q7T394"/>
<dbReference type="FunCoup" id="Q7T394">
    <property type="interactions" value="2587"/>
</dbReference>
<dbReference type="STRING" id="7955.ENSDARP00000042217"/>
<dbReference type="PaxDb" id="7955-ENSDARP00000042217"/>
<dbReference type="Ensembl" id="ENSDART00000042218">
    <property type="protein sequence ID" value="ENSDARP00000042217"/>
    <property type="gene ID" value="ENSDARG00000032013"/>
</dbReference>
<dbReference type="Ensembl" id="ENSDART00000190690">
    <property type="protein sequence ID" value="ENSDARP00000156578"/>
    <property type="gene ID" value="ENSDARG00000032013"/>
</dbReference>
<dbReference type="GeneID" id="394246"/>
<dbReference type="KEGG" id="dre:394246"/>
<dbReference type="AGR" id="ZFIN:ZDB-GENE-040116-2"/>
<dbReference type="CTD" id="394246"/>
<dbReference type="ZFIN" id="ZDB-GENE-040116-2">
    <property type="gene designation" value="pafah1b1a"/>
</dbReference>
<dbReference type="eggNOG" id="KOG0295">
    <property type="taxonomic scope" value="Eukaryota"/>
</dbReference>
<dbReference type="HOGENOM" id="CLU_000288_57_15_1"/>
<dbReference type="InParanoid" id="Q7T394"/>
<dbReference type="OMA" id="WHVATKE"/>
<dbReference type="OrthoDB" id="674604at2759"/>
<dbReference type="PhylomeDB" id="Q7T394"/>
<dbReference type="TreeFam" id="TF105741"/>
<dbReference type="PRO" id="PR:Q7T394"/>
<dbReference type="Proteomes" id="UP000000437">
    <property type="component" value="Chromosome 15"/>
</dbReference>
<dbReference type="Bgee" id="ENSDARG00000032013">
    <property type="expression patterns" value="Expressed in testis and 48 other cell types or tissues"/>
</dbReference>
<dbReference type="ExpressionAtlas" id="Q7T394">
    <property type="expression patterns" value="baseline and differential"/>
</dbReference>
<dbReference type="GO" id="GO:0008247">
    <property type="term" value="C:1-alkyl-2-acetylglycerophosphocholine esterase complex"/>
    <property type="evidence" value="ECO:0000250"/>
    <property type="project" value="UniProtKB"/>
</dbReference>
<dbReference type="GO" id="GO:1904115">
    <property type="term" value="C:axon cytoplasm"/>
    <property type="evidence" value="ECO:0007669"/>
    <property type="project" value="GOC"/>
</dbReference>
<dbReference type="GO" id="GO:0005813">
    <property type="term" value="C:centrosome"/>
    <property type="evidence" value="ECO:0007669"/>
    <property type="project" value="UniProtKB-SubCell"/>
</dbReference>
<dbReference type="GO" id="GO:0005737">
    <property type="term" value="C:cytoplasm"/>
    <property type="evidence" value="ECO:0000314"/>
    <property type="project" value="ZFIN"/>
</dbReference>
<dbReference type="GO" id="GO:0005881">
    <property type="term" value="C:cytoplasmic microtubule"/>
    <property type="evidence" value="ECO:0000318"/>
    <property type="project" value="GO_Central"/>
</dbReference>
<dbReference type="GO" id="GO:0000776">
    <property type="term" value="C:kinetochore"/>
    <property type="evidence" value="ECO:0000318"/>
    <property type="project" value="GO_Central"/>
</dbReference>
<dbReference type="GO" id="GO:0005875">
    <property type="term" value="C:microtubule associated complex"/>
    <property type="evidence" value="ECO:0000318"/>
    <property type="project" value="GO_Central"/>
</dbReference>
<dbReference type="GO" id="GO:0043005">
    <property type="term" value="C:neuron projection"/>
    <property type="evidence" value="ECO:0000318"/>
    <property type="project" value="GO_Central"/>
</dbReference>
<dbReference type="GO" id="GO:0043025">
    <property type="term" value="C:neuronal cell body"/>
    <property type="evidence" value="ECO:0000318"/>
    <property type="project" value="GO_Central"/>
</dbReference>
<dbReference type="GO" id="GO:0005635">
    <property type="term" value="C:nuclear envelope"/>
    <property type="evidence" value="ECO:0000318"/>
    <property type="project" value="GO_Central"/>
</dbReference>
<dbReference type="GO" id="GO:0070840">
    <property type="term" value="F:dynein complex binding"/>
    <property type="evidence" value="ECO:0000318"/>
    <property type="project" value="GO_Central"/>
</dbReference>
<dbReference type="GO" id="GO:0051010">
    <property type="term" value="F:microtubule plus-end binding"/>
    <property type="evidence" value="ECO:0000318"/>
    <property type="project" value="GO_Central"/>
</dbReference>
<dbReference type="GO" id="GO:0046982">
    <property type="term" value="F:protein heterodimerization activity"/>
    <property type="evidence" value="ECO:0000250"/>
    <property type="project" value="UniProtKB"/>
</dbReference>
<dbReference type="GO" id="GO:0048854">
    <property type="term" value="P:brain morphogenesis"/>
    <property type="evidence" value="ECO:0000315"/>
    <property type="project" value="ZFIN"/>
</dbReference>
<dbReference type="GO" id="GO:0051301">
    <property type="term" value="P:cell division"/>
    <property type="evidence" value="ECO:0007669"/>
    <property type="project" value="UniProtKB-KW"/>
</dbReference>
<dbReference type="GO" id="GO:0000132">
    <property type="term" value="P:establishment of mitotic spindle orientation"/>
    <property type="evidence" value="ECO:0000318"/>
    <property type="project" value="GO_Central"/>
</dbReference>
<dbReference type="GO" id="GO:0007281">
    <property type="term" value="P:germ cell development"/>
    <property type="evidence" value="ECO:0000318"/>
    <property type="project" value="GO_Central"/>
</dbReference>
<dbReference type="GO" id="GO:0031023">
    <property type="term" value="P:microtubule organizing center organization"/>
    <property type="evidence" value="ECO:0000318"/>
    <property type="project" value="GO_Central"/>
</dbReference>
<dbReference type="GO" id="GO:0051012">
    <property type="term" value="P:microtubule sliding"/>
    <property type="evidence" value="ECO:0007669"/>
    <property type="project" value="UniProtKB-UniRule"/>
</dbReference>
<dbReference type="GO" id="GO:0007097">
    <property type="term" value="P:nuclear migration"/>
    <property type="evidence" value="ECO:0000318"/>
    <property type="project" value="GO_Central"/>
</dbReference>
<dbReference type="GO" id="GO:0038026">
    <property type="term" value="P:reelin-mediated signaling pathway"/>
    <property type="evidence" value="ECO:0000250"/>
    <property type="project" value="UniProtKB"/>
</dbReference>
<dbReference type="GO" id="GO:0008090">
    <property type="term" value="P:retrograde axonal transport"/>
    <property type="evidence" value="ECO:0000318"/>
    <property type="project" value="GO_Central"/>
</dbReference>
<dbReference type="GO" id="GO:0047496">
    <property type="term" value="P:vesicle transport along microtubule"/>
    <property type="evidence" value="ECO:0000318"/>
    <property type="project" value="GO_Central"/>
</dbReference>
<dbReference type="CDD" id="cd00200">
    <property type="entry name" value="WD40"/>
    <property type="match status" value="1"/>
</dbReference>
<dbReference type="FunFam" id="2.130.10.10:FF:000038">
    <property type="entry name" value="Lissencephaly-1 homolog B"/>
    <property type="match status" value="1"/>
</dbReference>
<dbReference type="FunFam" id="1.20.960.30:FF:000002">
    <property type="entry name" value="Platelet-activating factor acetylhydrolase ib"/>
    <property type="match status" value="1"/>
</dbReference>
<dbReference type="Gene3D" id="1.20.960.30">
    <property type="match status" value="1"/>
</dbReference>
<dbReference type="Gene3D" id="2.130.10.10">
    <property type="entry name" value="YVTN repeat-like/Quinoprotein amine dehydrogenase"/>
    <property type="match status" value="1"/>
</dbReference>
<dbReference type="HAMAP" id="MF_03141">
    <property type="entry name" value="lis1"/>
    <property type="match status" value="1"/>
</dbReference>
<dbReference type="InterPro" id="IPR050844">
    <property type="entry name" value="Coatomer_complex_subunit"/>
</dbReference>
<dbReference type="InterPro" id="IPR017252">
    <property type="entry name" value="Dynein_regulator_LIS1"/>
</dbReference>
<dbReference type="InterPro" id="IPR020472">
    <property type="entry name" value="G-protein_beta_WD-40_rep"/>
</dbReference>
<dbReference type="InterPro" id="IPR037190">
    <property type="entry name" value="LIS1_N"/>
</dbReference>
<dbReference type="InterPro" id="IPR006594">
    <property type="entry name" value="LisH"/>
</dbReference>
<dbReference type="InterPro" id="IPR056795">
    <property type="entry name" value="PAC1-like_LisH-like_dom"/>
</dbReference>
<dbReference type="InterPro" id="IPR015943">
    <property type="entry name" value="WD40/YVTN_repeat-like_dom_sf"/>
</dbReference>
<dbReference type="InterPro" id="IPR019775">
    <property type="entry name" value="WD40_repeat_CS"/>
</dbReference>
<dbReference type="InterPro" id="IPR036322">
    <property type="entry name" value="WD40_repeat_dom_sf"/>
</dbReference>
<dbReference type="InterPro" id="IPR001680">
    <property type="entry name" value="WD40_rpt"/>
</dbReference>
<dbReference type="PANTHER" id="PTHR19876">
    <property type="entry name" value="COATOMER"/>
    <property type="match status" value="1"/>
</dbReference>
<dbReference type="PANTHER" id="PTHR19876:SF2">
    <property type="entry name" value="COATOMER SUBUNIT BETA"/>
    <property type="match status" value="1"/>
</dbReference>
<dbReference type="Pfam" id="PF24951">
    <property type="entry name" value="LisH_PAC1"/>
    <property type="match status" value="1"/>
</dbReference>
<dbReference type="Pfam" id="PF00400">
    <property type="entry name" value="WD40"/>
    <property type="match status" value="7"/>
</dbReference>
<dbReference type="PIRSF" id="PIRSF037647">
    <property type="entry name" value="Dynein_regulator_Lis1"/>
    <property type="match status" value="1"/>
</dbReference>
<dbReference type="PRINTS" id="PR00320">
    <property type="entry name" value="GPROTEINBRPT"/>
</dbReference>
<dbReference type="SMART" id="SM00667">
    <property type="entry name" value="LisH"/>
    <property type="match status" value="1"/>
</dbReference>
<dbReference type="SMART" id="SM00320">
    <property type="entry name" value="WD40"/>
    <property type="match status" value="7"/>
</dbReference>
<dbReference type="SUPFAM" id="SSF109925">
    <property type="entry name" value="Lissencephaly-1 protein (Lis-1, PAF-AH alpha) N-terminal domain"/>
    <property type="match status" value="1"/>
</dbReference>
<dbReference type="SUPFAM" id="SSF50978">
    <property type="entry name" value="WD40 repeat-like"/>
    <property type="match status" value="1"/>
</dbReference>
<dbReference type="PROSITE" id="PS50896">
    <property type="entry name" value="LISH"/>
    <property type="match status" value="1"/>
</dbReference>
<dbReference type="PROSITE" id="PS00678">
    <property type="entry name" value="WD_REPEATS_1"/>
    <property type="match status" value="4"/>
</dbReference>
<dbReference type="PROSITE" id="PS50082">
    <property type="entry name" value="WD_REPEATS_2"/>
    <property type="match status" value="7"/>
</dbReference>
<dbReference type="PROSITE" id="PS50294">
    <property type="entry name" value="WD_REPEATS_REGION"/>
    <property type="match status" value="1"/>
</dbReference>
<evidence type="ECO:0000250" key="1">
    <source>
        <dbReference type="UniProtKB" id="P43033"/>
    </source>
</evidence>
<evidence type="ECO:0000255" key="2">
    <source>
        <dbReference type="HAMAP-Rule" id="MF_03141"/>
    </source>
</evidence>
<accession>Q7T394</accession>
<accession>Q07DR1</accession>
<comment type="function">
    <text evidence="1 2">Regulatory subunit (beta subunit) of the cytosolic type I platelet-activating factor (PAF) acetylhydrolase (PAF-AH (I)), an enzyme that catalyzes the hydrolyze of the acetyl group at the sn-2 position of PAF and its analogs and participates in PAF inactivation. Regulates the PAF-AH (I) activity in a catalytic dimer composition-dependent manner (By similarity). Positively regulates the activity of the minus-end directed microtubule motor protein dynein. May enhance dynein-mediated microtubule sliding by targeting dynein to the microtubule plus end. Required for several dynein- and microtubule-dependent processes such as the maintenance of Golgi integrity, the peripheral transport of microtubule fragments and the coupling of the nucleus and centrosome. May be required for proliferation of neuronal precursors and neuronal migration.</text>
</comment>
<comment type="subunit">
    <text evidence="1 2">Can self-associate. Component of the cytosolic PAF-AH (I) heterotetrameric enzyme, which is composed of PAFAH1B1 (beta), PAFAH1B2 (alpha2) and PAFAH1B3 (alpha1) subunits. The catalytic activity of the enzyme resides in the alpha1 (PAFAH1B3) and alpha2 (PAFAH1B2) subunits, whereas the beta subunit (PAFAH1B1) has regulatory activity. Trimer formation is not essential for the catalytic activity (By similarity). Interacts with dynein, dynactin, nde1 and ndel1.</text>
</comment>
<comment type="subcellular location">
    <subcellularLocation>
        <location evidence="2">Cytoplasm</location>
        <location evidence="2">Cytoskeleton</location>
    </subcellularLocation>
    <subcellularLocation>
        <location evidence="2">Cytoplasm</location>
        <location evidence="2">Cytoskeleton</location>
        <location evidence="2">Microtubule organizing center</location>
        <location evidence="2">Centrosome</location>
    </subcellularLocation>
    <text evidence="2">Localizes to the plus end of microtubules and to the centrosome.</text>
</comment>
<comment type="domain">
    <text evidence="2">Dimerization mediated by the LisH domain may be required to activate dynein.</text>
</comment>
<comment type="similarity">
    <text evidence="2">Belongs to the WD repeat LIS1/nudF family.</text>
</comment>
<organism>
    <name type="scientific">Danio rerio</name>
    <name type="common">Zebrafish</name>
    <name type="synonym">Brachydanio rerio</name>
    <dbReference type="NCBI Taxonomy" id="7955"/>
    <lineage>
        <taxon>Eukaryota</taxon>
        <taxon>Metazoa</taxon>
        <taxon>Chordata</taxon>
        <taxon>Craniata</taxon>
        <taxon>Vertebrata</taxon>
        <taxon>Euteleostomi</taxon>
        <taxon>Actinopterygii</taxon>
        <taxon>Neopterygii</taxon>
        <taxon>Teleostei</taxon>
        <taxon>Ostariophysi</taxon>
        <taxon>Cypriniformes</taxon>
        <taxon>Danionidae</taxon>
        <taxon>Danioninae</taxon>
        <taxon>Danio</taxon>
    </lineage>
</organism>
<keyword id="KW-0131">Cell cycle</keyword>
<keyword id="KW-0132">Cell division</keyword>
<keyword id="KW-0175">Coiled coil</keyword>
<keyword id="KW-0963">Cytoplasm</keyword>
<keyword id="KW-0206">Cytoskeleton</keyword>
<keyword id="KW-0217">Developmental protein</keyword>
<keyword id="KW-0221">Differentiation</keyword>
<keyword id="KW-0493">Microtubule</keyword>
<keyword id="KW-0498">Mitosis</keyword>
<keyword id="KW-0524">Neurogenesis</keyword>
<keyword id="KW-1185">Reference proteome</keyword>
<keyword id="KW-0677">Repeat</keyword>
<keyword id="KW-0813">Transport</keyword>
<keyword id="KW-0853">WD repeat</keyword>
<protein>
    <recommendedName>
        <fullName evidence="2">Lissencephaly-1 homolog A</fullName>
    </recommendedName>
    <alternativeName>
        <fullName evidence="2">Platelet-activating factor acetylhydrolase IB subunit alpha a</fullName>
    </alternativeName>
</protein>
<proteinExistence type="evidence at transcript level"/>
<gene>
    <name type="primary">pafah1b1a</name>
    <name evidence="2" type="synonym">lis1b</name>
    <name type="ORF">si:dkey-95O3.1</name>
</gene>
<sequence length="410" mass="46513">MVLSQRQRDELNRAIADYLRSNGYEEAYSVFKKEAELDMNEELDKKYAGLLEKKWTSVIRLQKKVMELESKLNEAKEEINIGGPIGQKRDPKEWIPRPPEKYALSGHRSPVTRVIFHPVFSVIVSASEDATIKVWDHETGDFERTLKGHTDSVQDISFDHTGKLLASCSADMTIKLWDFQGFECIRTMHGHDHNVSSVAIMPNGDHIVSASRDKTIKMWEVATGYCVKTFTGHREWVRMVRPNQDGTLIASSSNDQTVRVWVVATKECKAELREHEHVVECISWAPESAHPTILEATGSETKKSGKPGPFLLSGSRDKTIKMWDVSIGMCLMTLVGHDNWVRGVLVHPGGKYIVSCADDKTLRIWDYKNKRCTKTLSAHEHFVTSLDFHKTAPYVVTGSVDQTVKVWECR</sequence>
<name>LIS1A_DANRE</name>
<reference key="1">
    <citation type="journal article" date="2007" name="Proc. Natl. Acad. Sci. U.S.A.">
        <title>Mechanism of positioning the cell nucleus in vertebrate photoreceptors.</title>
        <authorList>
            <person name="Tsujikawa M."/>
            <person name="Omori Y."/>
            <person name="Biyanwila J."/>
            <person name="Malicki J."/>
        </authorList>
    </citation>
    <scope>NUCLEOTIDE SEQUENCE [MRNA]</scope>
</reference>
<reference key="2">
    <citation type="journal article" date="2013" name="Nature">
        <title>The zebrafish reference genome sequence and its relationship to the human genome.</title>
        <authorList>
            <person name="Howe K."/>
            <person name="Clark M.D."/>
            <person name="Torroja C.F."/>
            <person name="Torrance J."/>
            <person name="Berthelot C."/>
            <person name="Muffato M."/>
            <person name="Collins J.E."/>
            <person name="Humphray S."/>
            <person name="McLaren K."/>
            <person name="Matthews L."/>
            <person name="McLaren S."/>
            <person name="Sealy I."/>
            <person name="Caccamo M."/>
            <person name="Churcher C."/>
            <person name="Scott C."/>
            <person name="Barrett J.C."/>
            <person name="Koch R."/>
            <person name="Rauch G.J."/>
            <person name="White S."/>
            <person name="Chow W."/>
            <person name="Kilian B."/>
            <person name="Quintais L.T."/>
            <person name="Guerra-Assuncao J.A."/>
            <person name="Zhou Y."/>
            <person name="Gu Y."/>
            <person name="Yen J."/>
            <person name="Vogel J.H."/>
            <person name="Eyre T."/>
            <person name="Redmond S."/>
            <person name="Banerjee R."/>
            <person name="Chi J."/>
            <person name="Fu B."/>
            <person name="Langley E."/>
            <person name="Maguire S.F."/>
            <person name="Laird G.K."/>
            <person name="Lloyd D."/>
            <person name="Kenyon E."/>
            <person name="Donaldson S."/>
            <person name="Sehra H."/>
            <person name="Almeida-King J."/>
            <person name="Loveland J."/>
            <person name="Trevanion S."/>
            <person name="Jones M."/>
            <person name="Quail M."/>
            <person name="Willey D."/>
            <person name="Hunt A."/>
            <person name="Burton J."/>
            <person name="Sims S."/>
            <person name="McLay K."/>
            <person name="Plumb B."/>
            <person name="Davis J."/>
            <person name="Clee C."/>
            <person name="Oliver K."/>
            <person name="Clark R."/>
            <person name="Riddle C."/>
            <person name="Elliot D."/>
            <person name="Threadgold G."/>
            <person name="Harden G."/>
            <person name="Ware D."/>
            <person name="Begum S."/>
            <person name="Mortimore B."/>
            <person name="Kerry G."/>
            <person name="Heath P."/>
            <person name="Phillimore B."/>
            <person name="Tracey A."/>
            <person name="Corby N."/>
            <person name="Dunn M."/>
            <person name="Johnson C."/>
            <person name="Wood J."/>
            <person name="Clark S."/>
            <person name="Pelan S."/>
            <person name="Griffiths G."/>
            <person name="Smith M."/>
            <person name="Glithero R."/>
            <person name="Howden P."/>
            <person name="Barker N."/>
            <person name="Lloyd C."/>
            <person name="Stevens C."/>
            <person name="Harley J."/>
            <person name="Holt K."/>
            <person name="Panagiotidis G."/>
            <person name="Lovell J."/>
            <person name="Beasley H."/>
            <person name="Henderson C."/>
            <person name="Gordon D."/>
            <person name="Auger K."/>
            <person name="Wright D."/>
            <person name="Collins J."/>
            <person name="Raisen C."/>
            <person name="Dyer L."/>
            <person name="Leung K."/>
            <person name="Robertson L."/>
            <person name="Ambridge K."/>
            <person name="Leongamornlert D."/>
            <person name="McGuire S."/>
            <person name="Gilderthorp R."/>
            <person name="Griffiths C."/>
            <person name="Manthravadi D."/>
            <person name="Nichol S."/>
            <person name="Barker G."/>
            <person name="Whitehead S."/>
            <person name="Kay M."/>
            <person name="Brown J."/>
            <person name="Murnane C."/>
            <person name="Gray E."/>
            <person name="Humphries M."/>
            <person name="Sycamore N."/>
            <person name="Barker D."/>
            <person name="Saunders D."/>
            <person name="Wallis J."/>
            <person name="Babbage A."/>
            <person name="Hammond S."/>
            <person name="Mashreghi-Mohammadi M."/>
            <person name="Barr L."/>
            <person name="Martin S."/>
            <person name="Wray P."/>
            <person name="Ellington A."/>
            <person name="Matthews N."/>
            <person name="Ellwood M."/>
            <person name="Woodmansey R."/>
            <person name="Clark G."/>
            <person name="Cooper J."/>
            <person name="Tromans A."/>
            <person name="Grafham D."/>
            <person name="Skuce C."/>
            <person name="Pandian R."/>
            <person name="Andrews R."/>
            <person name="Harrison E."/>
            <person name="Kimberley A."/>
            <person name="Garnett J."/>
            <person name="Fosker N."/>
            <person name="Hall R."/>
            <person name="Garner P."/>
            <person name="Kelly D."/>
            <person name="Bird C."/>
            <person name="Palmer S."/>
            <person name="Gehring I."/>
            <person name="Berger A."/>
            <person name="Dooley C.M."/>
            <person name="Ersan-Urun Z."/>
            <person name="Eser C."/>
            <person name="Geiger H."/>
            <person name="Geisler M."/>
            <person name="Karotki L."/>
            <person name="Kirn A."/>
            <person name="Konantz J."/>
            <person name="Konantz M."/>
            <person name="Oberlander M."/>
            <person name="Rudolph-Geiger S."/>
            <person name="Teucke M."/>
            <person name="Lanz C."/>
            <person name="Raddatz G."/>
            <person name="Osoegawa K."/>
            <person name="Zhu B."/>
            <person name="Rapp A."/>
            <person name="Widaa S."/>
            <person name="Langford C."/>
            <person name="Yang F."/>
            <person name="Schuster S.C."/>
            <person name="Carter N.P."/>
            <person name="Harrow J."/>
            <person name="Ning Z."/>
            <person name="Herrero J."/>
            <person name="Searle S.M."/>
            <person name="Enright A."/>
            <person name="Geisler R."/>
            <person name="Plasterk R.H."/>
            <person name="Lee C."/>
            <person name="Westerfield M."/>
            <person name="de Jong P.J."/>
            <person name="Zon L.I."/>
            <person name="Postlethwait J.H."/>
            <person name="Nusslein-Volhard C."/>
            <person name="Hubbard T.J."/>
            <person name="Roest Crollius H."/>
            <person name="Rogers J."/>
            <person name="Stemple D.L."/>
        </authorList>
    </citation>
    <scope>NUCLEOTIDE SEQUENCE [LARGE SCALE GENOMIC DNA]</scope>
    <source>
        <strain>Tuebingen</strain>
    </source>
</reference>
<reference key="3">
    <citation type="submission" date="2003-06" db="EMBL/GenBank/DDBJ databases">
        <authorList>
            <consortium name="NIH - Zebrafish Gene Collection (ZGC) project"/>
        </authorList>
    </citation>
    <scope>NUCLEOTIDE SEQUENCE [LARGE SCALE MRNA]</scope>
    <source>
        <tissue>Kidney</tissue>
    </source>
</reference>
<feature type="initiator methionine" description="Removed" evidence="2">
    <location>
        <position position="1"/>
    </location>
</feature>
<feature type="chain" id="PRO_0000240416" description="Lissencephaly-1 homolog A">
    <location>
        <begin position="2"/>
        <end position="410"/>
    </location>
</feature>
<feature type="domain" description="LisH" evidence="2">
    <location>
        <begin position="7"/>
        <end position="39"/>
    </location>
</feature>
<feature type="repeat" description="WD 1">
    <location>
        <begin position="106"/>
        <end position="145"/>
    </location>
</feature>
<feature type="repeat" description="WD 2">
    <location>
        <begin position="148"/>
        <end position="187"/>
    </location>
</feature>
<feature type="repeat" description="WD 3">
    <location>
        <begin position="190"/>
        <end position="229"/>
    </location>
</feature>
<feature type="repeat" description="WD 4">
    <location>
        <begin position="232"/>
        <end position="271"/>
    </location>
</feature>
<feature type="repeat" description="WD 5">
    <location>
        <begin position="274"/>
        <end position="333"/>
    </location>
</feature>
<feature type="repeat" description="WD 6">
    <location>
        <begin position="336"/>
        <end position="375"/>
    </location>
</feature>
<feature type="repeat" description="WD 7">
    <location>
        <begin position="378"/>
        <end position="410"/>
    </location>
</feature>
<feature type="coiled-coil region" evidence="2">
    <location>
        <begin position="56"/>
        <end position="83"/>
    </location>
</feature>